<gene>
    <name evidence="1" type="primary">xseA</name>
    <name type="ordered locus">TM1040_1945</name>
</gene>
<comment type="function">
    <text evidence="1">Bidirectionally degrades single-stranded DNA into large acid-insoluble oligonucleotides, which are then degraded further into small acid-soluble oligonucleotides.</text>
</comment>
<comment type="catalytic activity">
    <reaction evidence="1">
        <text>Exonucleolytic cleavage in either 5'- to 3'- or 3'- to 5'-direction to yield nucleoside 5'-phosphates.</text>
        <dbReference type="EC" id="3.1.11.6"/>
    </reaction>
</comment>
<comment type="subunit">
    <text evidence="1">Heterooligomer composed of large and small subunits.</text>
</comment>
<comment type="subcellular location">
    <subcellularLocation>
        <location evidence="1">Cytoplasm</location>
    </subcellularLocation>
</comment>
<comment type="similarity">
    <text evidence="1">Belongs to the XseA family.</text>
</comment>
<dbReference type="EC" id="3.1.11.6" evidence="1"/>
<dbReference type="EMBL" id="CP000377">
    <property type="protein sequence ID" value="ABF64678.1"/>
    <property type="molecule type" value="Genomic_DNA"/>
</dbReference>
<dbReference type="RefSeq" id="WP_011539271.1">
    <property type="nucleotide sequence ID" value="NC_008044.1"/>
</dbReference>
<dbReference type="SMR" id="Q1GF88"/>
<dbReference type="STRING" id="292414.TM1040_1945"/>
<dbReference type="KEGG" id="sit:TM1040_1945"/>
<dbReference type="eggNOG" id="COG1570">
    <property type="taxonomic scope" value="Bacteria"/>
</dbReference>
<dbReference type="HOGENOM" id="CLU_023625_3_1_5"/>
<dbReference type="OrthoDB" id="9802795at2"/>
<dbReference type="Proteomes" id="UP000000636">
    <property type="component" value="Chromosome"/>
</dbReference>
<dbReference type="GO" id="GO:0005737">
    <property type="term" value="C:cytoplasm"/>
    <property type="evidence" value="ECO:0007669"/>
    <property type="project" value="UniProtKB-SubCell"/>
</dbReference>
<dbReference type="GO" id="GO:0009318">
    <property type="term" value="C:exodeoxyribonuclease VII complex"/>
    <property type="evidence" value="ECO:0007669"/>
    <property type="project" value="InterPro"/>
</dbReference>
<dbReference type="GO" id="GO:0008855">
    <property type="term" value="F:exodeoxyribonuclease VII activity"/>
    <property type="evidence" value="ECO:0007669"/>
    <property type="project" value="UniProtKB-UniRule"/>
</dbReference>
<dbReference type="GO" id="GO:0003676">
    <property type="term" value="F:nucleic acid binding"/>
    <property type="evidence" value="ECO:0007669"/>
    <property type="project" value="InterPro"/>
</dbReference>
<dbReference type="GO" id="GO:0006308">
    <property type="term" value="P:DNA catabolic process"/>
    <property type="evidence" value="ECO:0007669"/>
    <property type="project" value="UniProtKB-UniRule"/>
</dbReference>
<dbReference type="CDD" id="cd04489">
    <property type="entry name" value="ExoVII_LU_OBF"/>
    <property type="match status" value="1"/>
</dbReference>
<dbReference type="HAMAP" id="MF_00378">
    <property type="entry name" value="Exonuc_7_L"/>
    <property type="match status" value="1"/>
</dbReference>
<dbReference type="InterPro" id="IPR003753">
    <property type="entry name" value="Exonuc_VII_L"/>
</dbReference>
<dbReference type="InterPro" id="IPR020579">
    <property type="entry name" value="Exonuc_VII_lsu_C"/>
</dbReference>
<dbReference type="InterPro" id="IPR025824">
    <property type="entry name" value="OB-fold_nuc-bd_dom"/>
</dbReference>
<dbReference type="NCBIfam" id="TIGR00237">
    <property type="entry name" value="xseA"/>
    <property type="match status" value="1"/>
</dbReference>
<dbReference type="PANTHER" id="PTHR30008">
    <property type="entry name" value="EXODEOXYRIBONUCLEASE 7 LARGE SUBUNIT"/>
    <property type="match status" value="1"/>
</dbReference>
<dbReference type="PANTHER" id="PTHR30008:SF0">
    <property type="entry name" value="EXODEOXYRIBONUCLEASE 7 LARGE SUBUNIT"/>
    <property type="match status" value="1"/>
</dbReference>
<dbReference type="Pfam" id="PF02601">
    <property type="entry name" value="Exonuc_VII_L"/>
    <property type="match status" value="1"/>
</dbReference>
<dbReference type="Pfam" id="PF13742">
    <property type="entry name" value="tRNA_anti_2"/>
    <property type="match status" value="1"/>
</dbReference>
<sequence length="502" mass="54266">MSDLLDDPTPGQNAPEFSVSEISGEVKRTLEGTFGRIRVRGEVGRVFKARSGHLYYDIKDDRSVLACTTWKGQISGLSVVPEEGLEVVVTGRLTAFGGQSKYNMNVDEVAVAGQGALMALLEKRKAQLAAEGLFAPERKKPLPYLPGIIGVITSPSGAVIRDILHRLRDRFPRKVLVWPVAVQGSNSAPEVARAIDGFNALTPGGALPRPDLIIVARGGGSIEDLWGFNEEIVARATAASDIPLISAVGHETDTTLIDYVSDLRAPTPTAAAEHAVPVRLELLGWVENQGARMANAASRAVQLRRQRLGDMARALPRPDTLLETPRQRLDRVSDRLPNALISGVQRRKLTLSDRAASLRPATLRGLVSSRQDKLKNLSSRLTLRPITQDLGRKRDALDRITKRLNTAQSSRIDRQIDRLSATARQLDILSYKATLRRGYAVVRDGAALVTSTEGARKAAELSIEFADGTFDVASAPSTTKKSAPKPAAPKAPKTPGEQGSLF</sequence>
<proteinExistence type="inferred from homology"/>
<protein>
    <recommendedName>
        <fullName evidence="1">Exodeoxyribonuclease 7 large subunit</fullName>
        <ecNumber evidence="1">3.1.11.6</ecNumber>
    </recommendedName>
    <alternativeName>
        <fullName evidence="1">Exodeoxyribonuclease VII large subunit</fullName>
        <shortName evidence="1">Exonuclease VII large subunit</shortName>
    </alternativeName>
</protein>
<name>EX7L_RUEST</name>
<keyword id="KW-0963">Cytoplasm</keyword>
<keyword id="KW-0269">Exonuclease</keyword>
<keyword id="KW-0378">Hydrolase</keyword>
<keyword id="KW-0540">Nuclease</keyword>
<keyword id="KW-1185">Reference proteome</keyword>
<feature type="chain" id="PRO_0000273693" description="Exodeoxyribonuclease 7 large subunit">
    <location>
        <begin position="1"/>
        <end position="502"/>
    </location>
</feature>
<feature type="region of interest" description="Disordered" evidence="2">
    <location>
        <begin position="474"/>
        <end position="502"/>
    </location>
</feature>
<feature type="compositionally biased region" description="Low complexity" evidence="2">
    <location>
        <begin position="474"/>
        <end position="495"/>
    </location>
</feature>
<accession>Q1GF88</accession>
<evidence type="ECO:0000255" key="1">
    <source>
        <dbReference type="HAMAP-Rule" id="MF_00378"/>
    </source>
</evidence>
<evidence type="ECO:0000256" key="2">
    <source>
        <dbReference type="SAM" id="MobiDB-lite"/>
    </source>
</evidence>
<reference key="1">
    <citation type="submission" date="2006-05" db="EMBL/GenBank/DDBJ databases">
        <title>Complete sequence of chromosome of Silicibacter sp. TM1040.</title>
        <authorList>
            <consortium name="US DOE Joint Genome Institute"/>
            <person name="Copeland A."/>
            <person name="Lucas S."/>
            <person name="Lapidus A."/>
            <person name="Barry K."/>
            <person name="Detter J.C."/>
            <person name="Glavina del Rio T."/>
            <person name="Hammon N."/>
            <person name="Israni S."/>
            <person name="Dalin E."/>
            <person name="Tice H."/>
            <person name="Pitluck S."/>
            <person name="Brettin T."/>
            <person name="Bruce D."/>
            <person name="Han C."/>
            <person name="Tapia R."/>
            <person name="Goodwin L."/>
            <person name="Thompson L.S."/>
            <person name="Gilna P."/>
            <person name="Schmutz J."/>
            <person name="Larimer F."/>
            <person name="Land M."/>
            <person name="Hauser L."/>
            <person name="Kyrpides N."/>
            <person name="Kim E."/>
            <person name="Belas R."/>
            <person name="Moran M.A."/>
            <person name="Buchan A."/>
            <person name="Gonzalez J.M."/>
            <person name="Schell M.A."/>
            <person name="Sun F."/>
            <person name="Richardson P."/>
        </authorList>
    </citation>
    <scope>NUCLEOTIDE SEQUENCE [LARGE SCALE GENOMIC DNA]</scope>
    <source>
        <strain>TM1040</strain>
    </source>
</reference>
<organism>
    <name type="scientific">Ruegeria sp. (strain TM1040)</name>
    <name type="common">Silicibacter sp.</name>
    <dbReference type="NCBI Taxonomy" id="292414"/>
    <lineage>
        <taxon>Bacteria</taxon>
        <taxon>Pseudomonadati</taxon>
        <taxon>Pseudomonadota</taxon>
        <taxon>Alphaproteobacteria</taxon>
        <taxon>Rhodobacterales</taxon>
        <taxon>Roseobacteraceae</taxon>
        <taxon>Ruegeria</taxon>
    </lineage>
</organism>